<dbReference type="EMBL" id="U08337">
    <property type="protein sequence ID" value="AAA18778.1"/>
    <property type="molecule type" value="mRNA"/>
</dbReference>
<dbReference type="EMBL" id="AL845445">
    <property type="status" value="NOT_ANNOTATED_CDS"/>
    <property type="molecule type" value="Genomic_DNA"/>
</dbReference>
<dbReference type="EMBL" id="CH466551">
    <property type="protein sequence ID" value="EDL06156.1"/>
    <property type="molecule type" value="Genomic_DNA"/>
</dbReference>
<dbReference type="EMBL" id="BC034546">
    <property type="protein sequence ID" value="AAH34546.1"/>
    <property type="molecule type" value="mRNA"/>
</dbReference>
<dbReference type="CCDS" id="CCDS16958.1"/>
<dbReference type="PIR" id="S43294">
    <property type="entry name" value="S43294"/>
</dbReference>
<dbReference type="RefSeq" id="NP_032135.2">
    <property type="nucleotide sequence ID" value="NM_008109.4"/>
</dbReference>
<dbReference type="SMR" id="P43027"/>
<dbReference type="BioGRID" id="199888">
    <property type="interactions" value="2"/>
</dbReference>
<dbReference type="FunCoup" id="P43027">
    <property type="interactions" value="862"/>
</dbReference>
<dbReference type="STRING" id="10090.ENSMUSP00000048079"/>
<dbReference type="GlyCosmos" id="P43027">
    <property type="glycosylation" value="1 site, No reported glycans"/>
</dbReference>
<dbReference type="GlyGen" id="P43027">
    <property type="glycosylation" value="1 site, 1 N-linked glycan (1 site)"/>
</dbReference>
<dbReference type="iPTMnet" id="P43027"/>
<dbReference type="PhosphoSitePlus" id="P43027"/>
<dbReference type="PaxDb" id="10090-ENSMUSP00000048079"/>
<dbReference type="ProteomicsDB" id="267786"/>
<dbReference type="Antibodypedia" id="2854">
    <property type="antibodies" value="405 antibodies from 32 providers"/>
</dbReference>
<dbReference type="DNASU" id="14563"/>
<dbReference type="Ensembl" id="ENSMUST00000040162.3">
    <property type="protein sequence ID" value="ENSMUSP00000048079.3"/>
    <property type="gene ID" value="ENSMUSG00000038259.5"/>
</dbReference>
<dbReference type="GeneID" id="14563"/>
<dbReference type="KEGG" id="mmu:14563"/>
<dbReference type="UCSC" id="uc012chg.1">
    <property type="organism name" value="mouse"/>
</dbReference>
<dbReference type="AGR" id="MGI:95688"/>
<dbReference type="CTD" id="8200"/>
<dbReference type="MGI" id="MGI:95688">
    <property type="gene designation" value="Gdf5"/>
</dbReference>
<dbReference type="VEuPathDB" id="HostDB:ENSMUSG00000038259"/>
<dbReference type="eggNOG" id="KOG3900">
    <property type="taxonomic scope" value="Eukaryota"/>
</dbReference>
<dbReference type="GeneTree" id="ENSGT00940000160455"/>
<dbReference type="HOGENOM" id="CLU_020515_0_0_1"/>
<dbReference type="InParanoid" id="P43027"/>
<dbReference type="OMA" id="DTAKWEV"/>
<dbReference type="OrthoDB" id="5987191at2759"/>
<dbReference type="PhylomeDB" id="P43027"/>
<dbReference type="TreeFam" id="TF316134"/>
<dbReference type="Reactome" id="R-MMU-2129379">
    <property type="pathway name" value="Molecules associated with elastic fibres"/>
</dbReference>
<dbReference type="BioGRID-ORCS" id="14563">
    <property type="hits" value="3 hits in 78 CRISPR screens"/>
</dbReference>
<dbReference type="PRO" id="PR:P43027"/>
<dbReference type="Proteomes" id="UP000000589">
    <property type="component" value="Chromosome 2"/>
</dbReference>
<dbReference type="RNAct" id="P43027">
    <property type="molecule type" value="protein"/>
</dbReference>
<dbReference type="Bgee" id="ENSMUSG00000038259">
    <property type="expression patterns" value="Expressed in manual digit and 108 other cell types or tissues"/>
</dbReference>
<dbReference type="GO" id="GO:0005615">
    <property type="term" value="C:extracellular space"/>
    <property type="evidence" value="ECO:0007669"/>
    <property type="project" value="UniProtKB-KW"/>
</dbReference>
<dbReference type="GO" id="GO:0005886">
    <property type="term" value="C:plasma membrane"/>
    <property type="evidence" value="ECO:0007669"/>
    <property type="project" value="UniProtKB-SubCell"/>
</dbReference>
<dbReference type="GO" id="GO:0036122">
    <property type="term" value="F:BMP binding"/>
    <property type="evidence" value="ECO:0007669"/>
    <property type="project" value="Ensembl"/>
</dbReference>
<dbReference type="GO" id="GO:0005125">
    <property type="term" value="F:cytokine activity"/>
    <property type="evidence" value="ECO:0007669"/>
    <property type="project" value="UniProtKB-KW"/>
</dbReference>
<dbReference type="GO" id="GO:0008083">
    <property type="term" value="F:growth factor activity"/>
    <property type="evidence" value="ECO:0007669"/>
    <property type="project" value="UniProtKB-KW"/>
</dbReference>
<dbReference type="GO" id="GO:0042802">
    <property type="term" value="F:identical protein binding"/>
    <property type="evidence" value="ECO:0007669"/>
    <property type="project" value="Ensembl"/>
</dbReference>
<dbReference type="GO" id="GO:0030509">
    <property type="term" value="P:BMP signaling pathway"/>
    <property type="evidence" value="ECO:0007669"/>
    <property type="project" value="Ensembl"/>
</dbReference>
<dbReference type="GO" id="GO:0007178">
    <property type="term" value="P:cell surface receptor protein serine/threonine kinase signaling pathway"/>
    <property type="evidence" value="ECO:0000316"/>
    <property type="project" value="MGI"/>
</dbReference>
<dbReference type="GO" id="GO:0060591">
    <property type="term" value="P:chondroblast differentiation"/>
    <property type="evidence" value="ECO:0007669"/>
    <property type="project" value="Ensembl"/>
</dbReference>
<dbReference type="GO" id="GO:0002062">
    <property type="term" value="P:chondrocyte differentiation"/>
    <property type="evidence" value="ECO:0000314"/>
    <property type="project" value="MGI"/>
</dbReference>
<dbReference type="GO" id="GO:0030326">
    <property type="term" value="P:embryonic limb morphogenesis"/>
    <property type="evidence" value="ECO:0000315"/>
    <property type="project" value="MGI"/>
</dbReference>
<dbReference type="GO" id="GO:0035136">
    <property type="term" value="P:forelimb morphogenesis"/>
    <property type="evidence" value="ECO:0000315"/>
    <property type="project" value="MGI"/>
</dbReference>
<dbReference type="GO" id="GO:0035137">
    <property type="term" value="P:hindlimb morphogenesis"/>
    <property type="evidence" value="ECO:0000315"/>
    <property type="project" value="MGI"/>
</dbReference>
<dbReference type="GO" id="GO:0097152">
    <property type="term" value="P:mesenchymal cell apoptotic process"/>
    <property type="evidence" value="ECO:0000315"/>
    <property type="project" value="MGI"/>
</dbReference>
<dbReference type="GO" id="GO:0032331">
    <property type="term" value="P:negative regulation of chondrocyte differentiation"/>
    <property type="evidence" value="ECO:0007669"/>
    <property type="project" value="Ensembl"/>
</dbReference>
<dbReference type="GO" id="GO:0050680">
    <property type="term" value="P:negative regulation of epithelial cell proliferation"/>
    <property type="evidence" value="ECO:0007669"/>
    <property type="project" value="Ensembl"/>
</dbReference>
<dbReference type="GO" id="GO:2001054">
    <property type="term" value="P:negative regulation of mesenchymal cell apoptotic process"/>
    <property type="evidence" value="ECO:0000315"/>
    <property type="project" value="MGI"/>
</dbReference>
<dbReference type="GO" id="GO:0043524">
    <property type="term" value="P:negative regulation of neuron apoptotic process"/>
    <property type="evidence" value="ECO:0007669"/>
    <property type="project" value="Ensembl"/>
</dbReference>
<dbReference type="GO" id="GO:0043932">
    <property type="term" value="P:ossification involved in bone remodeling"/>
    <property type="evidence" value="ECO:0007669"/>
    <property type="project" value="Ensembl"/>
</dbReference>
<dbReference type="GO" id="GO:0030513">
    <property type="term" value="P:positive regulation of BMP signaling pathway"/>
    <property type="evidence" value="ECO:0007669"/>
    <property type="project" value="Ensembl"/>
</dbReference>
<dbReference type="GO" id="GO:0032332">
    <property type="term" value="P:positive regulation of chondrocyte differentiation"/>
    <property type="evidence" value="ECO:0000314"/>
    <property type="project" value="MGI"/>
</dbReference>
<dbReference type="GO" id="GO:0045666">
    <property type="term" value="P:positive regulation of neuron differentiation"/>
    <property type="evidence" value="ECO:0007669"/>
    <property type="project" value="Ensembl"/>
</dbReference>
<dbReference type="GO" id="GO:0060391">
    <property type="term" value="P:positive regulation of SMAD protein signal transduction"/>
    <property type="evidence" value="ECO:0007669"/>
    <property type="project" value="Ensembl"/>
</dbReference>
<dbReference type="GO" id="GO:0040014">
    <property type="term" value="P:regulation of multicellular organism growth"/>
    <property type="evidence" value="ECO:0000315"/>
    <property type="project" value="MGI"/>
</dbReference>
<dbReference type="GO" id="GO:0009612">
    <property type="term" value="P:response to mechanical stimulus"/>
    <property type="evidence" value="ECO:0007669"/>
    <property type="project" value="Ensembl"/>
</dbReference>
<dbReference type="CDD" id="cd19399">
    <property type="entry name" value="TGF_beta_GDF5"/>
    <property type="match status" value="1"/>
</dbReference>
<dbReference type="FunFam" id="2.10.90.10:FF:000001">
    <property type="entry name" value="Bone morphogenetic protein 4"/>
    <property type="match status" value="1"/>
</dbReference>
<dbReference type="FunFam" id="2.60.120.970:FF:000011">
    <property type="entry name" value="Growth/differentiation factor 5"/>
    <property type="match status" value="1"/>
</dbReference>
<dbReference type="Gene3D" id="2.60.120.970">
    <property type="match status" value="1"/>
</dbReference>
<dbReference type="Gene3D" id="2.10.90.10">
    <property type="entry name" value="Cystine-knot cytokines"/>
    <property type="match status" value="1"/>
</dbReference>
<dbReference type="InterPro" id="IPR029034">
    <property type="entry name" value="Cystine-knot_cytokine"/>
</dbReference>
<dbReference type="InterPro" id="IPR001839">
    <property type="entry name" value="TGF-b_C"/>
</dbReference>
<dbReference type="InterPro" id="IPR001111">
    <property type="entry name" value="TGF-b_propeptide"/>
</dbReference>
<dbReference type="InterPro" id="IPR015615">
    <property type="entry name" value="TGF-beta-rel"/>
</dbReference>
<dbReference type="InterPro" id="IPR017948">
    <property type="entry name" value="TGFb_CS"/>
</dbReference>
<dbReference type="PANTHER" id="PTHR11848:SF44">
    <property type="entry name" value="GROWTH_DIFFERENTIATION FACTOR 5"/>
    <property type="match status" value="1"/>
</dbReference>
<dbReference type="PANTHER" id="PTHR11848">
    <property type="entry name" value="TGF-BETA FAMILY"/>
    <property type="match status" value="1"/>
</dbReference>
<dbReference type="Pfam" id="PF00019">
    <property type="entry name" value="TGF_beta"/>
    <property type="match status" value="1"/>
</dbReference>
<dbReference type="Pfam" id="PF00688">
    <property type="entry name" value="TGFb_propeptide"/>
    <property type="match status" value="1"/>
</dbReference>
<dbReference type="SMART" id="SM00204">
    <property type="entry name" value="TGFB"/>
    <property type="match status" value="1"/>
</dbReference>
<dbReference type="SUPFAM" id="SSF57501">
    <property type="entry name" value="Cystine-knot cytokines"/>
    <property type="match status" value="1"/>
</dbReference>
<dbReference type="PROSITE" id="PS00250">
    <property type="entry name" value="TGF_BETA_1"/>
    <property type="match status" value="1"/>
</dbReference>
<dbReference type="PROSITE" id="PS51362">
    <property type="entry name" value="TGF_BETA_2"/>
    <property type="match status" value="1"/>
</dbReference>
<organism>
    <name type="scientific">Mus musculus</name>
    <name type="common">Mouse</name>
    <dbReference type="NCBI Taxonomy" id="10090"/>
    <lineage>
        <taxon>Eukaryota</taxon>
        <taxon>Metazoa</taxon>
        <taxon>Chordata</taxon>
        <taxon>Craniata</taxon>
        <taxon>Vertebrata</taxon>
        <taxon>Euteleostomi</taxon>
        <taxon>Mammalia</taxon>
        <taxon>Eutheria</taxon>
        <taxon>Euarchontoglires</taxon>
        <taxon>Glires</taxon>
        <taxon>Rodentia</taxon>
        <taxon>Myomorpha</taxon>
        <taxon>Muroidea</taxon>
        <taxon>Muridae</taxon>
        <taxon>Murinae</taxon>
        <taxon>Mus</taxon>
        <taxon>Mus</taxon>
    </lineage>
</organism>
<proteinExistence type="evidence at protein level"/>
<reference key="1">
    <citation type="journal article" date="1994" name="Nature">
        <title>Limb alterations in brachypodism mice due to mutations in a new member of the TGF beta-superfamily.</title>
        <authorList>
            <person name="Storm E.E."/>
            <person name="Huynh T.V."/>
            <person name="Copeland N.G."/>
            <person name="Jenkins N.A."/>
            <person name="Kingsley D.M."/>
            <person name="Lee S.-J."/>
        </authorList>
    </citation>
    <scope>NUCLEOTIDE SEQUENCE [MRNA]</scope>
    <scope>VARIANT SER-98</scope>
    <source>
        <strain>CD-1</strain>
        <tissue>Embryo</tissue>
    </source>
</reference>
<reference key="2">
    <citation type="journal article" date="2009" name="PLoS Biol.">
        <title>Lineage-specific biology revealed by a finished genome assembly of the mouse.</title>
        <authorList>
            <person name="Church D.M."/>
            <person name="Goodstadt L."/>
            <person name="Hillier L.W."/>
            <person name="Zody M.C."/>
            <person name="Goldstein S."/>
            <person name="She X."/>
            <person name="Bult C.J."/>
            <person name="Agarwala R."/>
            <person name="Cherry J.L."/>
            <person name="DiCuccio M."/>
            <person name="Hlavina W."/>
            <person name="Kapustin Y."/>
            <person name="Meric P."/>
            <person name="Maglott D."/>
            <person name="Birtle Z."/>
            <person name="Marques A.C."/>
            <person name="Graves T."/>
            <person name="Zhou S."/>
            <person name="Teague B."/>
            <person name="Potamousis K."/>
            <person name="Churas C."/>
            <person name="Place M."/>
            <person name="Herschleb J."/>
            <person name="Runnheim R."/>
            <person name="Forrest D."/>
            <person name="Amos-Landgraf J."/>
            <person name="Schwartz D.C."/>
            <person name="Cheng Z."/>
            <person name="Lindblad-Toh K."/>
            <person name="Eichler E.E."/>
            <person name="Ponting C.P."/>
        </authorList>
    </citation>
    <scope>NUCLEOTIDE SEQUENCE [LARGE SCALE GENOMIC DNA]</scope>
    <source>
        <strain>C57BL/6J</strain>
    </source>
</reference>
<reference key="3">
    <citation type="submission" date="2005-07" db="EMBL/GenBank/DDBJ databases">
        <authorList>
            <person name="Mural R.J."/>
            <person name="Adams M.D."/>
            <person name="Myers E.W."/>
            <person name="Smith H.O."/>
            <person name="Venter J.C."/>
        </authorList>
    </citation>
    <scope>NUCLEOTIDE SEQUENCE [LARGE SCALE GENOMIC DNA]</scope>
</reference>
<reference key="4">
    <citation type="journal article" date="2004" name="Genome Res.">
        <title>The status, quality, and expansion of the NIH full-length cDNA project: the Mammalian Gene Collection (MGC).</title>
        <authorList>
            <consortium name="The MGC Project Team"/>
        </authorList>
    </citation>
    <scope>NUCLEOTIDE SEQUENCE [LARGE SCALE MRNA]</scope>
    <scope>VARIANT SER-98</scope>
    <source>
        <strain>FVB/N</strain>
        <tissue>Salivary gland</tissue>
    </source>
</reference>
<reference key="5">
    <citation type="journal article" date="2004" name="Dev. Growth Differ.">
        <title>Developmentally regulated expression of mouse HtrA3 and its role as an inhibitor of TGF-beta signaling.</title>
        <authorList>
            <person name="Tocharus J."/>
            <person name="Tsuchiya A."/>
            <person name="Kajikawa M."/>
            <person name="Ueta Y."/>
            <person name="Oka C."/>
            <person name="Kawaichi M."/>
        </authorList>
    </citation>
    <scope>INTERACTION WITH HTRA3</scope>
</reference>
<reference key="6">
    <citation type="journal article" date="2004" name="Development">
        <title>HtrA1 serine protease inhibits signaling mediated by Tgfbeta family proteins.</title>
        <authorList>
            <person name="Oka C."/>
            <person name="Tsujimoto R."/>
            <person name="Kajikawa M."/>
            <person name="Koshiba-Takeuchi K."/>
            <person name="Ina J."/>
            <person name="Yano M."/>
            <person name="Tsuchiya A."/>
            <person name="Ueta Y."/>
            <person name="Soma A."/>
            <person name="Kanda H."/>
            <person name="Matsumoto M."/>
            <person name="Kawaichi M."/>
        </authorList>
    </citation>
    <scope>INTERACTION WITH HTRA1</scope>
</reference>
<reference key="7">
    <citation type="journal article" date="2013" name="Nat. Genet.">
        <title>BMP signaling controls muscle mass.</title>
        <authorList>
            <person name="Sartori R."/>
            <person name="Schirwis E."/>
            <person name="Blaauw B."/>
            <person name="Bortolanza S."/>
            <person name="Zhao J."/>
            <person name="Enzo E."/>
            <person name="Stantzou A."/>
            <person name="Mouisel E."/>
            <person name="Toniolo L."/>
            <person name="Ferry A."/>
            <person name="Stricker S."/>
            <person name="Goldberg A.L."/>
            <person name="Dupont S."/>
            <person name="Piccolo S."/>
            <person name="Amthor H."/>
            <person name="Sandri M."/>
        </authorList>
    </citation>
    <scope>FUNCTION</scope>
    <scope>INDUCTION</scope>
</reference>
<name>GDF5_MOUSE</name>
<sequence>MRLPKLLTLLLWHLAWLDLELICTVLGAPDLGQRTPGAKPGLTKAEAKERPPLARNVFRPGGHIYGVGATNARAKGSSGQTQAKKDEPRKMPPRSGGPETKPGPSSQTRQAAARTVTPKGQLPGGKASSKAGSAPSSFLLKKTREPGTPREPKEPFRPPPITPHEYMLSLYRTLSDADRKGGNSSVKLEAGLANTITSFIDKGQDDRGPAVRKQRYVFDISALEKDGLLGAELRILRKKPLDVAKPAVPSSGRVAQLKLSSCPSGRQPAALLDVRSVPGLDGSGWEVFDIWKLFRNFKNSAQLCLELEAWERGRAVDLRGLGFERTARQVHEKALFLVFGRTKKRDLFFNEIKARSGQDDKTVYEYLFSQRRKRRAPLANRQGKRPSKNLKARCSRKALHVNFKDMGWDDWIIAPLEYEAFHCEGLCEFPLRSHLEPTNHAVIQTLMNSMDPESTPPTCCVPTRLSPISILFIDSANNVVYKQYEDMVVESCGCR</sequence>
<evidence type="ECO:0000250" key="1"/>
<evidence type="ECO:0000250" key="2">
    <source>
        <dbReference type="UniProtKB" id="P43026"/>
    </source>
</evidence>
<evidence type="ECO:0000255" key="3"/>
<evidence type="ECO:0000256" key="4">
    <source>
        <dbReference type="SAM" id="MobiDB-lite"/>
    </source>
</evidence>
<evidence type="ECO:0000269" key="5">
    <source>
    </source>
</evidence>
<evidence type="ECO:0000269" key="6">
    <source>
    </source>
</evidence>
<evidence type="ECO:0000269" key="7">
    <source>
    </source>
</evidence>
<evidence type="ECO:0000269" key="8">
    <source>
    </source>
</evidence>
<evidence type="ECO:0000269" key="9">
    <source>
    </source>
</evidence>
<evidence type="ECO:0000305" key="10"/>
<protein>
    <recommendedName>
        <fullName>Growth/differentiation factor 5</fullName>
        <shortName>GDF-5</shortName>
    </recommendedName>
    <alternativeName>
        <fullName>Bone morphogenetic protein 14</fullName>
        <shortName>BMP-14</shortName>
    </alternativeName>
</protein>
<accession>P43027</accession>
<accession>A2ARK2</accession>
<keyword id="KW-1003">Cell membrane</keyword>
<keyword id="KW-0891">Chondrogenesis</keyword>
<keyword id="KW-0165">Cleavage on pair of basic residues</keyword>
<keyword id="KW-0202">Cytokine</keyword>
<keyword id="KW-1015">Disulfide bond</keyword>
<keyword id="KW-0325">Glycoprotein</keyword>
<keyword id="KW-0339">Growth factor</keyword>
<keyword id="KW-0472">Membrane</keyword>
<keyword id="KW-1185">Reference proteome</keyword>
<keyword id="KW-0964">Secreted</keyword>
<keyword id="KW-0732">Signal</keyword>
<comment type="function">
    <text evidence="2 8">Growth factor involved in bone and cartilage formation. During cartilage development regulates differentiation of chondrogenic tissue through two pathways. Firstly, positively regulates differentiation of chondrogenic tissue through its binding of high affinity with BMPR1B and of less affinity with BMPR1A, leading to induction of SMAD1-SMAD5-SMAD8 complex phosphorylation and then SMAD protein signaling transduction (By similarity). Secondly, negatively regulates chondrogenic differentiation through its interaction with NOG (By similarity). Required to prevent excessive muscle loss upon denervation. This function requires SMAD4 and is mediated by phosphorylated SMAD1/5/8 (PubMed:24076600). Binds bacterial lipopolysaccharide (LPS) and mediates LPS-induced inflammatory response, including TNF secretion by monocytes (By similarity).</text>
</comment>
<comment type="subunit">
    <text evidence="2 5 6">Homodimer; disulfide-linked (By similarity). Interacts with serine proteases, HTRA1 and HTRA3 (PubMed:14973287, PubMed:15206957). Following LPS binding, may form a complex with CXCR4, HSP90AA1 and HSPA8 (By similarity). Interacts with high affinity with NOG; inhibits chondrogenesis (By similarity). Interacts with high affinity with BMPR1B and lower affinity with BMPR1A; positively regulates chondrocyte differentiation and induces SMAD-dependent signaling. Interacts with FBN1 (via N-terminal domain) and FBN2 (By similarity). Interacts with TGFBR3 (By similarity).</text>
</comment>
<comment type="subcellular location">
    <subcellularLocation>
        <location evidence="2">Secreted</location>
    </subcellularLocation>
    <subcellularLocation>
        <location evidence="2">Cell membrane</location>
    </subcellularLocation>
</comment>
<comment type="induction">
    <text evidence="8">Induced over 300-fold in tibialis anterior muscles 3 days following denervation. High expression is maintained at least until 10 days after denervation.</text>
</comment>
<comment type="disease">
    <text evidence="9">Defects in Gdf5 are the cause of brachypodism (bp) which alters the length and numbers of bones in the limbs but spares the axial skeleton.</text>
</comment>
<comment type="similarity">
    <text evidence="10">Belongs to the TGF-beta family.</text>
</comment>
<gene>
    <name type="primary">Gdf5</name>
    <name type="synonym">Bmp14</name>
    <name type="synonym">Bp</name>
    <name type="synonym">Gdf-5</name>
</gene>
<feature type="signal peptide" evidence="3">
    <location>
        <begin position="1"/>
        <end position="27"/>
    </location>
</feature>
<feature type="propeptide" id="PRO_0000033914" evidence="3">
    <location>
        <begin position="28"/>
        <end position="375"/>
    </location>
</feature>
<feature type="chain" id="PRO_0000033915" description="Growth/differentiation factor 5">
    <location>
        <begin position="376"/>
        <end position="495"/>
    </location>
</feature>
<feature type="region of interest" description="Disordered" evidence="4">
    <location>
        <begin position="30"/>
        <end position="162"/>
    </location>
</feature>
<feature type="compositionally biased region" description="Low complexity" evidence="4">
    <location>
        <begin position="124"/>
        <end position="137"/>
    </location>
</feature>
<feature type="compositionally biased region" description="Basic and acidic residues" evidence="4">
    <location>
        <begin position="142"/>
        <end position="156"/>
    </location>
</feature>
<feature type="glycosylation site" description="N-linked (GlcNAc...) asparagine" evidence="3">
    <location>
        <position position="183"/>
    </location>
</feature>
<feature type="disulfide bond" evidence="1">
    <location>
        <begin position="394"/>
        <end position="460"/>
    </location>
</feature>
<feature type="disulfide bond" evidence="1">
    <location>
        <begin position="423"/>
        <end position="492"/>
    </location>
</feature>
<feature type="disulfide bond" evidence="1">
    <location>
        <begin position="427"/>
        <end position="494"/>
    </location>
</feature>
<feature type="disulfide bond" description="Interchain" evidence="1">
    <location>
        <position position="459"/>
    </location>
</feature>
<feature type="sequence variant" evidence="7 9">
    <original>P</original>
    <variation>S</variation>
    <location>
        <position position="98"/>
    </location>
</feature>